<name>MFS2_AJECA</name>
<feature type="chain" id="PRO_0000444410" description="MFS siderochrome iron transporter 1">
    <location>
        <begin position="1"/>
        <end position="588"/>
    </location>
</feature>
<feature type="transmembrane region" description="Helical" evidence="1">
    <location>
        <begin position="60"/>
        <end position="80"/>
    </location>
</feature>
<feature type="transmembrane region" description="Helical" evidence="1">
    <location>
        <begin position="104"/>
        <end position="124"/>
    </location>
</feature>
<feature type="transmembrane region" description="Helical" evidence="1">
    <location>
        <begin position="133"/>
        <end position="153"/>
    </location>
</feature>
<feature type="transmembrane region" description="Helical" evidence="1">
    <location>
        <begin position="161"/>
        <end position="181"/>
    </location>
</feature>
<feature type="transmembrane region" description="Helical" evidence="1">
    <location>
        <begin position="191"/>
        <end position="211"/>
    </location>
</feature>
<feature type="transmembrane region" description="Helical" evidence="1">
    <location>
        <begin position="225"/>
        <end position="245"/>
    </location>
</feature>
<feature type="transmembrane region" description="Helical" evidence="1">
    <location>
        <begin position="278"/>
        <end position="298"/>
    </location>
</feature>
<feature type="transmembrane region" description="Helical" evidence="1">
    <location>
        <begin position="307"/>
        <end position="327"/>
    </location>
</feature>
<feature type="transmembrane region" description="Helical" evidence="1">
    <location>
        <begin position="348"/>
        <end position="368"/>
    </location>
</feature>
<feature type="transmembrane region" description="Helical" evidence="1">
    <location>
        <begin position="385"/>
        <end position="405"/>
    </location>
</feature>
<feature type="transmembrane region" description="Helical" evidence="1">
    <location>
        <begin position="413"/>
        <end position="433"/>
    </location>
</feature>
<feature type="transmembrane region" description="Helical" evidence="1">
    <location>
        <begin position="440"/>
        <end position="460"/>
    </location>
</feature>
<feature type="transmembrane region" description="Helical" evidence="1">
    <location>
        <begin position="473"/>
        <end position="495"/>
    </location>
</feature>
<feature type="transmembrane region" description="Helical" evidence="1">
    <location>
        <begin position="552"/>
        <end position="572"/>
    </location>
</feature>
<feature type="glycosylation site" description="N-linked (GlcNAc...) asparagine" evidence="2">
    <location>
        <position position="519"/>
    </location>
</feature>
<gene>
    <name evidence="4" type="primary">MFS2</name>
</gene>
<accession>B2KWH6</accession>
<proteinExistence type="evidence at transcript level"/>
<dbReference type="EMBL" id="EU253971">
    <property type="protein sequence ID" value="ACC64449.1"/>
    <property type="molecule type" value="Genomic_DNA"/>
</dbReference>
<dbReference type="SMR" id="B2KWH6"/>
<dbReference type="GlyCosmos" id="B2KWH6">
    <property type="glycosylation" value="1 site, No reported glycans"/>
</dbReference>
<dbReference type="VEuPathDB" id="FungiDB:I7I52_11061"/>
<dbReference type="OrthoDB" id="4078873at2759"/>
<dbReference type="GO" id="GO:0005886">
    <property type="term" value="C:plasma membrane"/>
    <property type="evidence" value="ECO:0007669"/>
    <property type="project" value="TreeGrafter"/>
</dbReference>
<dbReference type="GO" id="GO:0022857">
    <property type="term" value="F:transmembrane transporter activity"/>
    <property type="evidence" value="ECO:0007669"/>
    <property type="project" value="InterPro"/>
</dbReference>
<dbReference type="FunFam" id="1.20.1250.20:FF:000335">
    <property type="entry name" value="Siderochrome iron transporter 2"/>
    <property type="match status" value="1"/>
</dbReference>
<dbReference type="FunFam" id="1.20.1250.20:FF:000284">
    <property type="entry name" value="Siderophore iron transporter mirB"/>
    <property type="match status" value="1"/>
</dbReference>
<dbReference type="Gene3D" id="1.20.1250.20">
    <property type="entry name" value="MFS general substrate transporter like domains"/>
    <property type="match status" value="2"/>
</dbReference>
<dbReference type="InterPro" id="IPR011701">
    <property type="entry name" value="MFS"/>
</dbReference>
<dbReference type="InterPro" id="IPR036259">
    <property type="entry name" value="MFS_trans_sf"/>
</dbReference>
<dbReference type="PANTHER" id="PTHR23501">
    <property type="entry name" value="MAJOR FACILITATOR SUPERFAMILY"/>
    <property type="match status" value="1"/>
</dbReference>
<dbReference type="PANTHER" id="PTHR23501:SF3">
    <property type="entry name" value="MAJOR FACILITATOR SUPERFAMILY (MFS) PROFILE DOMAIN-CONTAINING PROTEIN"/>
    <property type="match status" value="1"/>
</dbReference>
<dbReference type="Pfam" id="PF07690">
    <property type="entry name" value="MFS_1"/>
    <property type="match status" value="1"/>
</dbReference>
<dbReference type="SUPFAM" id="SSF103473">
    <property type="entry name" value="MFS general substrate transporter"/>
    <property type="match status" value="2"/>
</dbReference>
<organism>
    <name type="scientific">Ajellomyces capsulatus</name>
    <name type="common">Darling's disease fungus</name>
    <name type="synonym">Histoplasma capsulatum</name>
    <dbReference type="NCBI Taxonomy" id="5037"/>
    <lineage>
        <taxon>Eukaryota</taxon>
        <taxon>Fungi</taxon>
        <taxon>Dikarya</taxon>
        <taxon>Ascomycota</taxon>
        <taxon>Pezizomycotina</taxon>
        <taxon>Eurotiomycetes</taxon>
        <taxon>Eurotiomycetidae</taxon>
        <taxon>Onygenales</taxon>
        <taxon>Ajellomycetaceae</taxon>
        <taxon>Histoplasma</taxon>
    </lineage>
</organism>
<sequence>MRSAFLSKLQTHAPVAQPQVISSGLAKEAGDLPQEQEVDAEDQLSADAQDGVRKIQATTQVWSKGHLIFAYVMIWVITFVDTMQQGMSNSLLPYVTSSFRLHSLTASTMIMSNIIGGLIKLPLAKVLDIWGRPQGFLIMVGALTIGLVMMAACNNVKTYAAAQVFYWVGYNGMSYTISIFIADTSALKNRALMFAFVSSPYIATVWVGGPLATVFLNGPGFRWGYGAFAIITPAITCPLYAVFAWNYKKAKDAGLLPEKTHSRTFTQSLKHYFFEFDIIGIILLASGLALFLLPFSLYSYQKDQWRSSLVISMIIVGGLLLIAFALYEKYRAPVCFIPFELLFDRTVLGACILAASLFVSFYIWDSYFSSFLQIVNDLSITQASYIVNIYSIGACFWSIIVGILVRWSGRFKWLALYFGVPLTILGVGLMITFRQPDVNIGYIIMCQIFIAFAGGTCVITEQMAVMAATSHQYVAVVLAVESMFANIGGAIGQTVAAAIWTGVFPQRLAEYLPDEAKANATLIYGDLTVQKSYPVGSLERIAINRAYGDGQKYMLIGGTAILAVGLGATMMWRDIKVKDFKQVKGLVV</sequence>
<reference key="1">
    <citation type="journal article" date="2008" name="PLoS Pathog.">
        <title>Histoplasma requires SID1, a member of an iron-regulated siderophore gene cluster, for host colonization.</title>
        <authorList>
            <person name="Hwang L.H."/>
            <person name="Mayfield J.A."/>
            <person name="Rine J."/>
            <person name="Sil A."/>
        </authorList>
    </citation>
    <scope>NUCLEOTIDE SEQUENCE [GENOMIC DNA]</scope>
    <scope>FUNCTION</scope>
    <source>
        <strain>ATCC 26032 / G217B</strain>
    </source>
</reference>
<comment type="function">
    <text evidence="3">Major facilitator transporter involved in siderophore transport (PubMed:18404210).</text>
</comment>
<comment type="subcellular location">
    <subcellularLocation>
        <location evidence="1">Membrane</location>
        <topology evidence="1">Multi-pass membrane protein</topology>
    </subcellularLocation>
</comment>
<comment type="induction">
    <text evidence="3">Expression is induced during iron deprivation (PubMed:18404210).</text>
</comment>
<comment type="similarity">
    <text evidence="5">Belongs to the major facilitator superfamily.</text>
</comment>
<keyword id="KW-0325">Glycoprotein</keyword>
<keyword id="KW-0472">Membrane</keyword>
<keyword id="KW-0812">Transmembrane</keyword>
<keyword id="KW-1133">Transmembrane helix</keyword>
<keyword id="KW-0813">Transport</keyword>
<protein>
    <recommendedName>
        <fullName evidence="4">MFS siderochrome iron transporter 1</fullName>
    </recommendedName>
</protein>
<evidence type="ECO:0000255" key="1"/>
<evidence type="ECO:0000255" key="2">
    <source>
        <dbReference type="PROSITE-ProRule" id="PRU00498"/>
    </source>
</evidence>
<evidence type="ECO:0000269" key="3">
    <source>
    </source>
</evidence>
<evidence type="ECO:0000303" key="4">
    <source>
    </source>
</evidence>
<evidence type="ECO:0000305" key="5"/>